<gene>
    <name type="primary">FASLG</name>
    <name type="synonym">CD95L</name>
    <name type="synonym">FASL</name>
    <name type="synonym">TNFSF6</name>
</gene>
<keyword id="KW-0053">Apoptosis</keyword>
<keyword id="KW-1003">Cell membrane</keyword>
<keyword id="KW-0202">Cytokine</keyword>
<keyword id="KW-0968">Cytoplasmic vesicle</keyword>
<keyword id="KW-1015">Disulfide bond</keyword>
<keyword id="KW-0325">Glycoprotein</keyword>
<keyword id="KW-0458">Lysosome</keyword>
<keyword id="KW-0472">Membrane</keyword>
<keyword id="KW-0539">Nucleus</keyword>
<keyword id="KW-1185">Reference proteome</keyword>
<keyword id="KW-0678">Repressor</keyword>
<keyword id="KW-0964">Secreted</keyword>
<keyword id="KW-0735">Signal-anchor</keyword>
<keyword id="KW-0804">Transcription</keyword>
<keyword id="KW-0805">Transcription regulation</keyword>
<keyword id="KW-0812">Transmembrane</keyword>
<keyword id="KW-1133">Transmembrane helix</keyword>
<keyword id="KW-0832">Ubl conjugation</keyword>
<reference key="1">
    <citation type="journal article" date="2001" name="J. Interferon Cytokine Res.">
        <title>Molecular cloning, characterization, and expression of porcine Fas ligand (CD95 ligand).</title>
        <authorList>
            <person name="Muneta Y."/>
            <person name="Shimoji Y."/>
            <person name="Inumaru S."/>
            <person name="Mori Y."/>
        </authorList>
    </citation>
    <scope>NUCLEOTIDE SEQUENCE [MRNA]</scope>
    <scope>FUNCTION</scope>
    <scope>SUBCELLULAR LOCATION</scope>
    <scope>INDUCTION</scope>
</reference>
<reference key="2">
    <citation type="journal article" date="2002" name="Mol. Immunol.">
        <title>Porcine Fas-ligand gene: genomic sequence analysis and comparison with human gene.</title>
        <authorList>
            <person name="Motegi-Ishiyama Y."/>
            <person name="Nakajima Y."/>
            <person name="Hoka S."/>
            <person name="Takagaki Y."/>
        </authorList>
    </citation>
    <scope>NUCLEOTIDE SEQUENCE [GENOMIC DNA]</scope>
    <source>
        <strain>Landrace X Large Yorkshire white</strain>
        <tissue>Thymocyte</tissue>
    </source>
</reference>
<reference key="3">
    <citation type="journal article" date="2002" name="Xenotransplantation">
        <title>Cloning and potential utility of porcine Fas ligand: overexpression in porcine endothelial cells protects them from attack by human cytolytic cells.</title>
        <authorList>
            <person name="Tsuyuki S."/>
            <person name="Kono M."/>
            <person name="Bloom E.T."/>
        </authorList>
    </citation>
    <scope>NUCLEOTIDE SEQUENCE [MRNA]</scope>
    <scope>FUNCTION</scope>
    <source>
        <tissue>Lymphoid tissue</tissue>
    </source>
</reference>
<reference key="4">
    <citation type="submission" date="2001-04" db="EMBL/GenBank/DDBJ databases">
        <title>Molecular cloning and characterization of porcine Fas ligand cDNA.</title>
        <authorList>
            <person name="Zhu N."/>
            <person name="Young Y."/>
        </authorList>
    </citation>
    <scope>NUCLEOTIDE SEQUENCE [MRNA]</scope>
    <source>
        <strain>Guanxi bama miniature pig</strain>
    </source>
</reference>
<evidence type="ECO:0000250" key="1"/>
<evidence type="ECO:0000250" key="2">
    <source>
        <dbReference type="UniProtKB" id="P41047"/>
    </source>
</evidence>
<evidence type="ECO:0000250" key="3">
    <source>
        <dbReference type="UniProtKB" id="P48023"/>
    </source>
</evidence>
<evidence type="ECO:0000255" key="4"/>
<evidence type="ECO:0000255" key="5">
    <source>
        <dbReference type="PROSITE-ProRule" id="PRU01387"/>
    </source>
</evidence>
<evidence type="ECO:0000256" key="6">
    <source>
        <dbReference type="SAM" id="MobiDB-lite"/>
    </source>
</evidence>
<evidence type="ECO:0000269" key="7">
    <source>
    </source>
</evidence>
<evidence type="ECO:0000269" key="8">
    <source>
    </source>
</evidence>
<evidence type="ECO:0000305" key="9"/>
<feature type="chain" id="PRO_0000034510" description="Tumor necrosis factor ligand superfamily member 6, membrane form">
    <location>
        <begin position="1"/>
        <end position="282"/>
    </location>
</feature>
<feature type="chain" id="PRO_0000417161" description="ADAM10-processed FasL form" evidence="1">
    <location>
        <begin position="1"/>
        <end position="130"/>
    </location>
</feature>
<feature type="chain" id="PRO_0000417162" description="FasL intracellular domain" evidence="1">
    <location>
        <begin position="1"/>
        <end position="83"/>
    </location>
</feature>
<feature type="chain" id="PRO_0000034511" description="Tumor necrosis factor ligand superfamily member 6, soluble form" evidence="1">
    <location>
        <begin position="131"/>
        <end position="282"/>
    </location>
</feature>
<feature type="topological domain" description="Cytoplasmic" evidence="4">
    <location>
        <begin position="1"/>
        <end position="82"/>
    </location>
</feature>
<feature type="transmembrane region" description="Helical; Signal-anchor for type II membrane protein" evidence="4">
    <location>
        <begin position="83"/>
        <end position="103"/>
    </location>
</feature>
<feature type="topological domain" description="Extracellular" evidence="4">
    <location>
        <begin position="104"/>
        <end position="282"/>
    </location>
</feature>
<feature type="domain" description="THD" evidence="5">
    <location>
        <begin position="146"/>
        <end position="282"/>
    </location>
</feature>
<feature type="region of interest" description="Disordered" evidence="6">
    <location>
        <begin position="30"/>
        <end position="73"/>
    </location>
</feature>
<feature type="region of interest" description="Disordered" evidence="6">
    <location>
        <begin position="119"/>
        <end position="140"/>
    </location>
</feature>
<feature type="compositionally biased region" description="Pro residues" evidence="6">
    <location>
        <begin position="43"/>
        <end position="71"/>
    </location>
</feature>
<feature type="compositionally biased region" description="Basic and acidic residues" evidence="6">
    <location>
        <begin position="119"/>
        <end position="132"/>
    </location>
</feature>
<feature type="site" description="Cleavage; by SPPL2A" evidence="1">
    <location>
        <begin position="82"/>
        <end position="83"/>
    </location>
</feature>
<feature type="site" description="Cleavage; by ADAM10" evidence="1">
    <location>
        <begin position="130"/>
        <end position="131"/>
    </location>
</feature>
<feature type="glycosylation site" description="N-linked (GlcNAc...) asparagine" evidence="4">
    <location>
        <position position="185"/>
    </location>
</feature>
<feature type="glycosylation site" description="N-linked (GlcNAc...) asparagine" evidence="4">
    <location>
        <position position="251"/>
    </location>
</feature>
<feature type="glycosylation site" description="N-linked (GlcNAc...) asparagine" evidence="4">
    <location>
        <position position="261"/>
    </location>
</feature>
<feature type="disulfide bond" evidence="5">
    <location>
        <begin position="203"/>
        <end position="234"/>
    </location>
</feature>
<feature type="sequence conflict" description="In Ref. 2; BAB64291." evidence="9" ref="2">
    <original>F</original>
    <variation>L</variation>
    <location>
        <position position="5"/>
    </location>
</feature>
<feature type="sequence conflict" description="In Ref. 4; AAK56449." evidence="9" ref="4">
    <original>T</original>
    <variation>P</variation>
    <location>
        <position position="57"/>
    </location>
</feature>
<organism>
    <name type="scientific">Sus scrofa</name>
    <name type="common">Pig</name>
    <dbReference type="NCBI Taxonomy" id="9823"/>
    <lineage>
        <taxon>Eukaryota</taxon>
        <taxon>Metazoa</taxon>
        <taxon>Chordata</taxon>
        <taxon>Craniata</taxon>
        <taxon>Vertebrata</taxon>
        <taxon>Euteleostomi</taxon>
        <taxon>Mammalia</taxon>
        <taxon>Eutheria</taxon>
        <taxon>Laurasiatheria</taxon>
        <taxon>Artiodactyla</taxon>
        <taxon>Suina</taxon>
        <taxon>Suidae</taxon>
        <taxon>Sus</taxon>
    </lineage>
</organism>
<proteinExistence type="evidence at transcript level"/>
<dbReference type="EMBL" id="AB027297">
    <property type="protein sequence ID" value="BAB40919.1"/>
    <property type="molecule type" value="mRNA"/>
</dbReference>
<dbReference type="EMBL" id="AB069764">
    <property type="protein sequence ID" value="BAB64291.1"/>
    <property type="molecule type" value="Genomic_DNA"/>
</dbReference>
<dbReference type="EMBL" id="AF397407">
    <property type="protein sequence ID" value="AAK84408.1"/>
    <property type="molecule type" value="mRNA"/>
</dbReference>
<dbReference type="EMBL" id="AY033634">
    <property type="protein sequence ID" value="AAK56449.1"/>
    <property type="molecule type" value="mRNA"/>
</dbReference>
<dbReference type="RefSeq" id="NP_998971.1">
    <property type="nucleotide sequence ID" value="NM_213806.1"/>
</dbReference>
<dbReference type="SMR" id="Q9BEA8"/>
<dbReference type="FunCoup" id="Q9BEA8">
    <property type="interactions" value="737"/>
</dbReference>
<dbReference type="STRING" id="9823.ENSSSCP00000019767"/>
<dbReference type="GlyCosmos" id="Q9BEA8">
    <property type="glycosylation" value="3 sites, No reported glycans"/>
</dbReference>
<dbReference type="GlyGen" id="Q9BEA8">
    <property type="glycosylation" value="3 sites"/>
</dbReference>
<dbReference type="PaxDb" id="9823-ENSSSCP00000019767"/>
<dbReference type="GeneID" id="396726"/>
<dbReference type="KEGG" id="ssc:396726"/>
<dbReference type="CTD" id="356"/>
<dbReference type="eggNOG" id="ENOG502RXC1">
    <property type="taxonomic scope" value="Eukaryota"/>
</dbReference>
<dbReference type="InParanoid" id="Q9BEA8"/>
<dbReference type="OrthoDB" id="5983780at2759"/>
<dbReference type="Proteomes" id="UP000008227">
    <property type="component" value="Unplaced"/>
</dbReference>
<dbReference type="Proteomes" id="UP000314985">
    <property type="component" value="Unplaced"/>
</dbReference>
<dbReference type="Proteomes" id="UP000694570">
    <property type="component" value="Unplaced"/>
</dbReference>
<dbReference type="Proteomes" id="UP000694571">
    <property type="component" value="Unplaced"/>
</dbReference>
<dbReference type="Proteomes" id="UP000694720">
    <property type="component" value="Unplaced"/>
</dbReference>
<dbReference type="Proteomes" id="UP000694722">
    <property type="component" value="Unplaced"/>
</dbReference>
<dbReference type="Proteomes" id="UP000694723">
    <property type="component" value="Unplaced"/>
</dbReference>
<dbReference type="Proteomes" id="UP000694724">
    <property type="component" value="Unplaced"/>
</dbReference>
<dbReference type="Proteomes" id="UP000694725">
    <property type="component" value="Unplaced"/>
</dbReference>
<dbReference type="Proteomes" id="UP000694726">
    <property type="component" value="Unplaced"/>
</dbReference>
<dbReference type="Proteomes" id="UP000694727">
    <property type="component" value="Unplaced"/>
</dbReference>
<dbReference type="Proteomes" id="UP000694728">
    <property type="component" value="Unplaced"/>
</dbReference>
<dbReference type="GO" id="GO:0060205">
    <property type="term" value="C:cytoplasmic vesicle lumen"/>
    <property type="evidence" value="ECO:0007669"/>
    <property type="project" value="UniProtKB-SubCell"/>
</dbReference>
<dbReference type="GO" id="GO:0005615">
    <property type="term" value="C:extracellular space"/>
    <property type="evidence" value="ECO:0000318"/>
    <property type="project" value="GO_Central"/>
</dbReference>
<dbReference type="GO" id="GO:0043202">
    <property type="term" value="C:lysosomal lumen"/>
    <property type="evidence" value="ECO:0007669"/>
    <property type="project" value="UniProtKB-SubCell"/>
</dbReference>
<dbReference type="GO" id="GO:0005634">
    <property type="term" value="C:nucleus"/>
    <property type="evidence" value="ECO:0000250"/>
    <property type="project" value="UniProtKB"/>
</dbReference>
<dbReference type="GO" id="GO:0005886">
    <property type="term" value="C:plasma membrane"/>
    <property type="evidence" value="ECO:0007669"/>
    <property type="project" value="UniProtKB-SubCell"/>
</dbReference>
<dbReference type="GO" id="GO:0005125">
    <property type="term" value="F:cytokine activity"/>
    <property type="evidence" value="ECO:0000318"/>
    <property type="project" value="GO_Central"/>
</dbReference>
<dbReference type="GO" id="GO:0005164">
    <property type="term" value="F:tumor necrosis factor receptor binding"/>
    <property type="evidence" value="ECO:0007669"/>
    <property type="project" value="InterPro"/>
</dbReference>
<dbReference type="GO" id="GO:0008625">
    <property type="term" value="P:extrinsic apoptotic signaling pathway via death domain receptors"/>
    <property type="evidence" value="ECO:0000318"/>
    <property type="project" value="GO_Central"/>
</dbReference>
<dbReference type="GO" id="GO:0006955">
    <property type="term" value="P:immune response"/>
    <property type="evidence" value="ECO:0007669"/>
    <property type="project" value="InterPro"/>
</dbReference>
<dbReference type="GO" id="GO:0000122">
    <property type="term" value="P:negative regulation of transcription by RNA polymerase II"/>
    <property type="evidence" value="ECO:0000250"/>
    <property type="project" value="UniProtKB"/>
</dbReference>
<dbReference type="GO" id="GO:0043123">
    <property type="term" value="P:positive regulation of canonical NF-kappaB signal transduction"/>
    <property type="evidence" value="ECO:0000318"/>
    <property type="project" value="GO_Central"/>
</dbReference>
<dbReference type="GO" id="GO:2001238">
    <property type="term" value="P:positive regulation of extrinsic apoptotic signaling pathway"/>
    <property type="evidence" value="ECO:0000318"/>
    <property type="project" value="GO_Central"/>
</dbReference>
<dbReference type="CDD" id="cd00184">
    <property type="entry name" value="TNF"/>
    <property type="match status" value="1"/>
</dbReference>
<dbReference type="FunFam" id="2.60.120.40:FF:000017">
    <property type="entry name" value="Tumor necrosis factor ligand superfamily member 6"/>
    <property type="match status" value="1"/>
</dbReference>
<dbReference type="Gene3D" id="2.60.120.40">
    <property type="match status" value="1"/>
</dbReference>
<dbReference type="InterPro" id="IPR028326">
    <property type="entry name" value="FASL"/>
</dbReference>
<dbReference type="InterPro" id="IPR006053">
    <property type="entry name" value="TNF"/>
</dbReference>
<dbReference type="InterPro" id="IPR021184">
    <property type="entry name" value="TNF_CS"/>
</dbReference>
<dbReference type="InterPro" id="IPR006052">
    <property type="entry name" value="TNF_dom"/>
</dbReference>
<dbReference type="InterPro" id="IPR008983">
    <property type="entry name" value="Tumour_necrosis_fac-like_dom"/>
</dbReference>
<dbReference type="PANTHER" id="PTHR11471">
    <property type="entry name" value="TUMOR NECROSIS FACTOR FAMILY MEMBER"/>
    <property type="match status" value="1"/>
</dbReference>
<dbReference type="PANTHER" id="PTHR11471:SF33">
    <property type="entry name" value="TUMOR NECROSIS FACTOR LIGAND SUPERFAMILY MEMBER 6"/>
    <property type="match status" value="1"/>
</dbReference>
<dbReference type="Pfam" id="PF00229">
    <property type="entry name" value="TNF"/>
    <property type="match status" value="1"/>
</dbReference>
<dbReference type="PRINTS" id="PR01681">
    <property type="entry name" value="FASLIGAND"/>
</dbReference>
<dbReference type="PRINTS" id="PR01234">
    <property type="entry name" value="TNECROSISFCT"/>
</dbReference>
<dbReference type="SMART" id="SM00207">
    <property type="entry name" value="TNF"/>
    <property type="match status" value="1"/>
</dbReference>
<dbReference type="SUPFAM" id="SSF101447">
    <property type="entry name" value="Formin homology 2 domain (FH2 domain)"/>
    <property type="match status" value="1"/>
</dbReference>
<dbReference type="SUPFAM" id="SSF49842">
    <property type="entry name" value="TNF-like"/>
    <property type="match status" value="1"/>
</dbReference>
<dbReference type="PROSITE" id="PS00251">
    <property type="entry name" value="THD_1"/>
    <property type="match status" value="1"/>
</dbReference>
<dbReference type="PROSITE" id="PS50049">
    <property type="entry name" value="THD_2"/>
    <property type="match status" value="1"/>
</dbReference>
<comment type="function">
    <text evidence="2 3 7 8">Cytokine that binds to TNFRSF6/FAS, a receptor that transduces the apoptotic signal into cells (PubMed:11429161, PubMed:12371937). Involved in cytotoxic T-cell-mediated apoptosis, natural killer cell-mediated apoptosis and in T-cell development (PubMed:11429161, PubMed:12371937). Initiates fratricidal/suicidal activation-induced cell death (AICD) in antigen-activated T-cells contributing to the termination of immune responses (By similarity). TNFRSF6/FAS-mediated apoptosis also has a role in the induction of peripheral tolerance (By similarity). Binds to TNFRSF6B/DcR3, a decoy receptor that blocks apoptosis (By similarity).</text>
</comment>
<comment type="function">
    <molecule>Tumor necrosis factor ligand superfamily member 6, soluble form</molecule>
    <text evidence="2">Induces FAS-mediated activation of NF-kappa-B, initiating non-apoptotic signaling pathways. Can induce apoptosis but does not appear to be essential for this process.</text>
</comment>
<comment type="function">
    <molecule>FasL intracellular domain</molecule>
    <text evidence="3">Cytoplasmic form induces gene transcription inhibition.</text>
</comment>
<comment type="subunit">
    <text evidence="3">Homotrimer. Interacts with ARHGAP9, BAIAP2L1, BTK, CACNB3, CACNB4, CRK, DLG2, DNMBP, DOCK4, EPS8L3, FGR, FYB1, FYN, HCK, ITK, ITSN2, KALRN, LYN, MACC1, MIA, MPP4, MYO15A, NCF1, NCK1, NCK2, NCKIPSD, OSTF1, PIK3R1, PSTPIP1, RIMBP3C, SAMSN1, SH3GL3, SH3PXD2B, SH3PXD2A, SH3RF2, SKAP2, SNX33, SNX9, SORBS3, SPTA1, SRC, SRGAP1, SRGAP2, SRGAP3, TEC, TJP3 and YES1.</text>
</comment>
<comment type="subcellular location">
    <subcellularLocation>
        <location evidence="3">Cell membrane</location>
        <topology evidence="4">Single-pass type II membrane protein</topology>
    </subcellularLocation>
    <subcellularLocation>
        <location evidence="3">Cytoplasmic vesicle lumen</location>
    </subcellularLocation>
    <subcellularLocation>
        <location evidence="3">Lysosome lumen</location>
    </subcellularLocation>
    <text evidence="3">Colocalizes with the SPPL2A protease at the cell membrane. Is internalized into multivesicular bodies of secretory lysosomes after phosphorylation by FGR and monoubiquitination.</text>
</comment>
<comment type="subcellular location">
    <molecule>Tumor necrosis factor ligand superfamily member 6, soluble form</molecule>
    <subcellularLocation>
        <location evidence="7">Secreted</location>
    </subcellularLocation>
    <text evidence="3">May be released into the extracellular fluid by cleavage from the cell surface.</text>
</comment>
<comment type="subcellular location">
    <molecule>FasL intracellular domain</molecule>
    <subcellularLocation>
        <location evidence="3">Nucleus</location>
    </subcellularLocation>
    <text evidence="3">The FasL ICD cytoplasmic form is translocated into the nucleus.</text>
</comment>
<comment type="induction">
    <text evidence="7">By IL-18.</text>
</comment>
<comment type="PTM">
    <text evidence="3">The soluble form derives from the membrane form by proteolytic processing. The membrane-bound form undergoes two successive intramembrane proteolytic cleavages. The first one is processed by ADAM10 producing an N-terminal fragment, which lacks the receptor-binding extracellular domain. This ADAM10-processed FasL (FasL APL) remnant form is still membrane anchored and further processed by SPPL2A that liberates the FasL intracellular domain (FasL ICD). FasL shedding by ADAM10 is a prerequisite for subsequent intramembrane cleavage by SPPL2A in T-cells.</text>
</comment>
<comment type="PTM">
    <text evidence="3">Phosphorylated by FGR on tyrosine residues; this is required for ubiquitination and subsequent internalization.</text>
</comment>
<comment type="PTM">
    <text evidence="3">N-glycosylated. Glycosylation enhances apoptotic activity.</text>
</comment>
<comment type="PTM">
    <text evidence="3">Monoubiquitinated.</text>
</comment>
<comment type="similarity">
    <text evidence="9">Belongs to the tumor necrosis factor family.</text>
</comment>
<sequence length="282" mass="31756">MQQPFNYPYPQIFWVDSSATSPWASPGSVFPCPASVPGRPGQRRPPPPPPPPPPPPTLLPSRPLPPLPPPSLKKKRDHNAGLCLLVMFFMVLVALVGLGLGMFQLFHLQKELTELRESASQRHTESSLEKQIGHPNLPSEKKELRKVAHLTGKPNSRSIPLEWEDTYGIALVSGVKYMKGSLVINDTGLYFVYSKVYFRGQYCNNQPLSHKVYTRNSRYPQDLVLMEGKMMNYCTTGQMWARSSYLGAVFNLTSADHLYVNVSELSLVNFEESKTFFGLYKL</sequence>
<accession>Q9BEA8</accession>
<accession>Q95M04</accession>
<accession>Q95N10</accession>
<name>TNFL6_PIG</name>
<protein>
    <recommendedName>
        <fullName>Tumor necrosis factor ligand superfamily member 6</fullName>
    </recommendedName>
    <alternativeName>
        <fullName>CD95 ligand</fullName>
        <shortName>CD95-L</shortName>
    </alternativeName>
    <alternativeName>
        <fullName>Fas antigen ligand</fullName>
        <shortName>Fas ligand</shortName>
        <shortName>FasL</shortName>
    </alternativeName>
    <cdAntigenName>CD178</cdAntigenName>
    <component>
        <recommendedName>
            <fullName>Tumor necrosis factor ligand superfamily member 6, membrane form</fullName>
        </recommendedName>
    </component>
    <component>
        <recommendedName>
            <fullName>Tumor necrosis factor ligand superfamily member 6, soluble form</fullName>
        </recommendedName>
        <alternativeName>
            <fullName>Receptor-binding FasL ectodomain</fullName>
        </alternativeName>
        <alternativeName>
            <fullName>Soluble Fas ligand</fullName>
            <shortName>sFasL</shortName>
        </alternativeName>
    </component>
    <component>
        <recommendedName>
            <fullName>ADAM10-processed FasL form</fullName>
            <shortName>APL</shortName>
        </recommendedName>
    </component>
    <component>
        <recommendedName>
            <fullName>FasL intracellular domain</fullName>
            <shortName>FasL ICD</shortName>
        </recommendedName>
        <alternativeName>
            <fullName>SPPL2A-processed FasL form</fullName>
            <shortName>SPA</shortName>
        </alternativeName>
    </component>
</protein>